<keyword id="KW-0963">Cytoplasm</keyword>
<keyword id="KW-0227">DNA damage</keyword>
<keyword id="KW-0228">DNA excision</keyword>
<keyword id="KW-0234">DNA repair</keyword>
<keyword id="KW-0267">Excision nuclease</keyword>
<keyword id="KW-0742">SOS response</keyword>
<comment type="function">
    <text evidence="1">The UvrABC repair system catalyzes the recognition and processing of DNA lesions. UvrC both incises the 5' and 3' sides of the lesion. The N-terminal half is responsible for the 3' incision and the C-terminal half is responsible for the 5' incision.</text>
</comment>
<comment type="subunit">
    <text evidence="1">Interacts with UvrB in an incision complex.</text>
</comment>
<comment type="subcellular location">
    <subcellularLocation>
        <location evidence="1">Cytoplasm</location>
    </subcellularLocation>
</comment>
<comment type="similarity">
    <text evidence="1">Belongs to the UvrC family.</text>
</comment>
<gene>
    <name evidence="1" type="primary">uvrC</name>
    <name type="ordered locus">SPC_1768</name>
</gene>
<protein>
    <recommendedName>
        <fullName evidence="1">UvrABC system protein C</fullName>
        <shortName evidence="1">Protein UvrC</shortName>
    </recommendedName>
    <alternativeName>
        <fullName evidence="1">Excinuclease ABC subunit C</fullName>
    </alternativeName>
</protein>
<sequence>MSEIFDAKAFLKTVTSQPGVYRMYDAGGTVIYVGKAKDLKKRLSSYFRSNLASRKTEALVAQIQHIDVTVTHTETEALLLEHNYIKLYQPRYNVLLRDDKSYPFIFLSGDTHPRLAMHRGAKHAKGEYFGPFPNGYAVRETLALLQKIFPIRQCENSVYRNRSRPCLQYQIGRCLGPCVAGLVSEEEYAQQVEYVRLFLSGKDDQVLTQLIARMEKASQDLAFEEAARIRDQIQAVRRVTERQFVSNAGDDLDVIGVAFDAGMACVHVLFIRQGKVLGSRSYFPKVPGGTELGEVVETFVGQFYLQGSQMRTLPGEILLDFNLSDKTLLADSLSELAGRRIHVQTKPRGDRARYLKLARTNAATALITKLSQQSTITQRLTALAAVLKLPAIKRMECFDISHTMGEQTVASCVVFDANGPLRAEYRRYNIAGITPGDDYAAMNQVLRRRYGKAIEESKIPDVILIDGGKGQLAQAKAVFAELDVPWDKHRPLLLGVAKGADRKAGLETLFFEPEGEGFSLPPDSPALHVIQHIRDESHDHAIGGHRKKRAKVKNTSTLETIEGVGPKRRQMLLKYMGGLQGLRNASVEEIAKVPGISQGLAEKIFWSLKH</sequence>
<feature type="chain" id="PRO_1000200598" description="UvrABC system protein C">
    <location>
        <begin position="1"/>
        <end position="610"/>
    </location>
</feature>
<feature type="domain" description="GIY-YIG" evidence="1">
    <location>
        <begin position="16"/>
        <end position="94"/>
    </location>
</feature>
<feature type="domain" description="UVR" evidence="1">
    <location>
        <begin position="204"/>
        <end position="239"/>
    </location>
</feature>
<evidence type="ECO:0000255" key="1">
    <source>
        <dbReference type="HAMAP-Rule" id="MF_00203"/>
    </source>
</evidence>
<accession>C0Q2A7</accession>
<proteinExistence type="inferred from homology"/>
<organism>
    <name type="scientific">Salmonella paratyphi C (strain RKS4594)</name>
    <dbReference type="NCBI Taxonomy" id="476213"/>
    <lineage>
        <taxon>Bacteria</taxon>
        <taxon>Pseudomonadati</taxon>
        <taxon>Pseudomonadota</taxon>
        <taxon>Gammaproteobacteria</taxon>
        <taxon>Enterobacterales</taxon>
        <taxon>Enterobacteriaceae</taxon>
        <taxon>Salmonella</taxon>
    </lineage>
</organism>
<name>UVRC_SALPC</name>
<dbReference type="EMBL" id="CP000857">
    <property type="protein sequence ID" value="ACN45910.1"/>
    <property type="molecule type" value="Genomic_DNA"/>
</dbReference>
<dbReference type="RefSeq" id="WP_001289468.1">
    <property type="nucleotide sequence ID" value="NC_012125.1"/>
</dbReference>
<dbReference type="SMR" id="C0Q2A7"/>
<dbReference type="KEGG" id="sei:SPC_1768"/>
<dbReference type="HOGENOM" id="CLU_014841_3_0_6"/>
<dbReference type="Proteomes" id="UP000001599">
    <property type="component" value="Chromosome"/>
</dbReference>
<dbReference type="GO" id="GO:0005737">
    <property type="term" value="C:cytoplasm"/>
    <property type="evidence" value="ECO:0007669"/>
    <property type="project" value="UniProtKB-SubCell"/>
</dbReference>
<dbReference type="GO" id="GO:0009380">
    <property type="term" value="C:excinuclease repair complex"/>
    <property type="evidence" value="ECO:0007669"/>
    <property type="project" value="InterPro"/>
</dbReference>
<dbReference type="GO" id="GO:0003677">
    <property type="term" value="F:DNA binding"/>
    <property type="evidence" value="ECO:0007669"/>
    <property type="project" value="UniProtKB-UniRule"/>
</dbReference>
<dbReference type="GO" id="GO:0009381">
    <property type="term" value="F:excinuclease ABC activity"/>
    <property type="evidence" value="ECO:0007669"/>
    <property type="project" value="UniProtKB-UniRule"/>
</dbReference>
<dbReference type="GO" id="GO:0006289">
    <property type="term" value="P:nucleotide-excision repair"/>
    <property type="evidence" value="ECO:0007669"/>
    <property type="project" value="UniProtKB-UniRule"/>
</dbReference>
<dbReference type="GO" id="GO:0009432">
    <property type="term" value="P:SOS response"/>
    <property type="evidence" value="ECO:0007669"/>
    <property type="project" value="UniProtKB-UniRule"/>
</dbReference>
<dbReference type="CDD" id="cd10434">
    <property type="entry name" value="GIY-YIG_UvrC_Cho"/>
    <property type="match status" value="1"/>
</dbReference>
<dbReference type="FunFam" id="1.10.150.20:FF:000005">
    <property type="entry name" value="UvrABC system protein C"/>
    <property type="match status" value="1"/>
</dbReference>
<dbReference type="FunFam" id="3.30.420.340:FF:000001">
    <property type="entry name" value="UvrABC system protein C"/>
    <property type="match status" value="1"/>
</dbReference>
<dbReference type="FunFam" id="3.40.1440.10:FF:000001">
    <property type="entry name" value="UvrABC system protein C"/>
    <property type="match status" value="1"/>
</dbReference>
<dbReference type="FunFam" id="4.10.860.10:FF:000002">
    <property type="entry name" value="UvrABC system protein C"/>
    <property type="match status" value="1"/>
</dbReference>
<dbReference type="Gene3D" id="1.10.150.20">
    <property type="entry name" value="5' to 3' exonuclease, C-terminal subdomain"/>
    <property type="match status" value="1"/>
</dbReference>
<dbReference type="Gene3D" id="3.40.1440.10">
    <property type="entry name" value="GIY-YIG endonuclease"/>
    <property type="match status" value="1"/>
</dbReference>
<dbReference type="Gene3D" id="4.10.860.10">
    <property type="entry name" value="UVR domain"/>
    <property type="match status" value="1"/>
</dbReference>
<dbReference type="Gene3D" id="3.30.420.340">
    <property type="entry name" value="UvrC, RNAse H endonuclease domain"/>
    <property type="match status" value="1"/>
</dbReference>
<dbReference type="HAMAP" id="MF_00203">
    <property type="entry name" value="UvrC"/>
    <property type="match status" value="1"/>
</dbReference>
<dbReference type="InterPro" id="IPR000305">
    <property type="entry name" value="GIY-YIG_endonuc"/>
</dbReference>
<dbReference type="InterPro" id="IPR035901">
    <property type="entry name" value="GIY-YIG_endonuc_sf"/>
</dbReference>
<dbReference type="InterPro" id="IPR047296">
    <property type="entry name" value="GIY-YIG_UvrC_Cho"/>
</dbReference>
<dbReference type="InterPro" id="IPR003583">
    <property type="entry name" value="Hlx-hairpin-Hlx_DNA-bd_motif"/>
</dbReference>
<dbReference type="InterPro" id="IPR010994">
    <property type="entry name" value="RuvA_2-like"/>
</dbReference>
<dbReference type="InterPro" id="IPR001943">
    <property type="entry name" value="UVR_dom"/>
</dbReference>
<dbReference type="InterPro" id="IPR036876">
    <property type="entry name" value="UVR_dom_sf"/>
</dbReference>
<dbReference type="InterPro" id="IPR050066">
    <property type="entry name" value="UvrABC_protein_C"/>
</dbReference>
<dbReference type="InterPro" id="IPR004791">
    <property type="entry name" value="UvrC"/>
</dbReference>
<dbReference type="InterPro" id="IPR001162">
    <property type="entry name" value="UvrC_RNase_H_dom"/>
</dbReference>
<dbReference type="InterPro" id="IPR038476">
    <property type="entry name" value="UvrC_RNase_H_dom_sf"/>
</dbReference>
<dbReference type="NCBIfam" id="NF001824">
    <property type="entry name" value="PRK00558.1-5"/>
    <property type="match status" value="1"/>
</dbReference>
<dbReference type="NCBIfam" id="TIGR00194">
    <property type="entry name" value="uvrC"/>
    <property type="match status" value="1"/>
</dbReference>
<dbReference type="PANTHER" id="PTHR30562:SF1">
    <property type="entry name" value="UVRABC SYSTEM PROTEIN C"/>
    <property type="match status" value="1"/>
</dbReference>
<dbReference type="PANTHER" id="PTHR30562">
    <property type="entry name" value="UVRC/OXIDOREDUCTASE"/>
    <property type="match status" value="1"/>
</dbReference>
<dbReference type="Pfam" id="PF01541">
    <property type="entry name" value="GIY-YIG"/>
    <property type="match status" value="1"/>
</dbReference>
<dbReference type="Pfam" id="PF14520">
    <property type="entry name" value="HHH_5"/>
    <property type="match status" value="1"/>
</dbReference>
<dbReference type="Pfam" id="PF02151">
    <property type="entry name" value="UVR"/>
    <property type="match status" value="1"/>
</dbReference>
<dbReference type="Pfam" id="PF22920">
    <property type="entry name" value="UvrC_RNaseH"/>
    <property type="match status" value="1"/>
</dbReference>
<dbReference type="Pfam" id="PF08459">
    <property type="entry name" value="UvrC_RNaseH_dom"/>
    <property type="match status" value="1"/>
</dbReference>
<dbReference type="SMART" id="SM00465">
    <property type="entry name" value="GIYc"/>
    <property type="match status" value="1"/>
</dbReference>
<dbReference type="SMART" id="SM00278">
    <property type="entry name" value="HhH1"/>
    <property type="match status" value="2"/>
</dbReference>
<dbReference type="SUPFAM" id="SSF46600">
    <property type="entry name" value="C-terminal UvrC-binding domain of UvrB"/>
    <property type="match status" value="1"/>
</dbReference>
<dbReference type="SUPFAM" id="SSF82771">
    <property type="entry name" value="GIY-YIG endonuclease"/>
    <property type="match status" value="1"/>
</dbReference>
<dbReference type="SUPFAM" id="SSF47781">
    <property type="entry name" value="RuvA domain 2-like"/>
    <property type="match status" value="1"/>
</dbReference>
<dbReference type="PROSITE" id="PS50164">
    <property type="entry name" value="GIY_YIG"/>
    <property type="match status" value="1"/>
</dbReference>
<dbReference type="PROSITE" id="PS50151">
    <property type="entry name" value="UVR"/>
    <property type="match status" value="1"/>
</dbReference>
<dbReference type="PROSITE" id="PS50165">
    <property type="entry name" value="UVRC"/>
    <property type="match status" value="1"/>
</dbReference>
<reference key="1">
    <citation type="journal article" date="2009" name="PLoS ONE">
        <title>Salmonella paratyphi C: genetic divergence from Salmonella choleraesuis and pathogenic convergence with Salmonella typhi.</title>
        <authorList>
            <person name="Liu W.-Q."/>
            <person name="Feng Y."/>
            <person name="Wang Y."/>
            <person name="Zou Q.-H."/>
            <person name="Chen F."/>
            <person name="Guo J.-T."/>
            <person name="Peng Y.-H."/>
            <person name="Jin Y."/>
            <person name="Li Y.-G."/>
            <person name="Hu S.-N."/>
            <person name="Johnston R.N."/>
            <person name="Liu G.-R."/>
            <person name="Liu S.-L."/>
        </authorList>
    </citation>
    <scope>NUCLEOTIDE SEQUENCE [LARGE SCALE GENOMIC DNA]</scope>
    <source>
        <strain>RKS4594</strain>
    </source>
</reference>